<keyword id="KW-0067">ATP-binding</keyword>
<keyword id="KW-1003">Cell membrane</keyword>
<keyword id="KW-0406">Ion transport</keyword>
<keyword id="KW-0472">Membrane</keyword>
<keyword id="KW-0547">Nucleotide-binding</keyword>
<keyword id="KW-0614">Plasmid</keyword>
<keyword id="KW-0630">Potassium</keyword>
<keyword id="KW-0633">Potassium transport</keyword>
<keyword id="KW-0812">Transmembrane</keyword>
<keyword id="KW-1133">Transmembrane helix</keyword>
<keyword id="KW-0813">Transport</keyword>
<reference key="1">
    <citation type="journal article" date="2008" name="Genomics">
        <title>Evolution in the laboratory: the genome of Halobacterium salinarum strain R1 compared to that of strain NRC-1.</title>
        <authorList>
            <person name="Pfeiffer F."/>
            <person name="Schuster S.C."/>
            <person name="Broicher A."/>
            <person name="Falb M."/>
            <person name="Palm P."/>
            <person name="Rodewald K."/>
            <person name="Ruepp A."/>
            <person name="Soppa J."/>
            <person name="Tittor J."/>
            <person name="Oesterhelt D."/>
        </authorList>
    </citation>
    <scope>NUCLEOTIDE SEQUENCE [LARGE SCALE GENOMIC DNA]</scope>
    <source>
        <strain>ATCC 29341 / DSM 671 / R1</strain>
    </source>
</reference>
<reference key="2">
    <citation type="journal article" date="2008" name="Extremophiles">
        <title>The extremely halophilic archaeon Halobacterium salinarum R1 responds to potassium limitation by expression of the K+-transporting KdpFABC P-type ATPase and by a decrease in intracellular K+.</title>
        <authorList>
            <person name="Strahl H."/>
            <person name="Greie J.C."/>
        </authorList>
    </citation>
    <scope>FUNCTION</scope>
    <scope>INDUCTION</scope>
    <scope>DISRUPTION PHENOTYPE</scope>
    <source>
        <strain>ATCC 29341 / DSM 671 / R1</strain>
    </source>
</reference>
<reference key="3">
    <citation type="journal article" date="2011" name="Extremophiles">
        <title>Archaeal transcriptional regulation of the prokaryotic KdpFABC complex mediating K(+) uptake in H. salinarum.</title>
        <authorList>
            <person name="Kixmueller D."/>
            <person name="Strahl H."/>
            <person name="Wende A."/>
            <person name="Greie J.C."/>
        </authorList>
    </citation>
    <scope>INDUCTION</scope>
    <source>
        <strain>ATCC 29341 / DSM 671 / R1</strain>
    </source>
</reference>
<reference key="4">
    <citation type="journal article" date="2012" name="Environ. Microbiol. Rep.">
        <title>An ATP-driven potassium pump promotes long-term survival of Halobacterium salinarum within salt crystals.</title>
        <authorList>
            <person name="Kixmueller D."/>
            <person name="Greie J.C."/>
        </authorList>
    </citation>
    <scope>FUNCTION</scope>
    <scope>INDUCTION</scope>
    <source>
        <strain>ATCC 29341 / DSM 671 / R1</strain>
    </source>
</reference>
<sequence length="216" mass="23768">MNRQDLAVPLRLLGVSLLVFGLLYQGSLMAIGDAVFPNSSAGSPVYVDGQEQPVGSQMIGQQFRPGQPEDVQYFWSRPSANDYNAMTSASTNWGPTNPLLSERVRADLQNISQYETPDDSVPVNLVSESGSSYDAHISPAAAEYQVLRVANQTGISEQRLNEMIDEATKEPWLGIWGHERVNVLELNLMVRDALNEQNETDQNSDMNASEIANGDH</sequence>
<protein>
    <recommendedName>
        <fullName evidence="2">Potassium-transporting ATPase KdpC subunit</fullName>
    </recommendedName>
    <alternativeName>
        <fullName evidence="2">ATP phosphohydrolase [potassium-transporting] C chain</fullName>
    </alternativeName>
    <alternativeName>
        <fullName evidence="2">Potassium-binding and translocating subunit C</fullName>
    </alternativeName>
    <alternativeName>
        <fullName evidence="2">Potassium-translocating ATPase C chain</fullName>
    </alternativeName>
</protein>
<gene>
    <name evidence="2 7" type="primary">kdpC</name>
    <name evidence="7" type="ordered locus">OE_5054F</name>
</gene>
<feature type="chain" id="PRO_0000433791" description="Potassium-transporting ATPase KdpC subunit">
    <location>
        <begin position="1"/>
        <end position="216"/>
    </location>
</feature>
<feature type="transmembrane region" description="Helical" evidence="2">
    <location>
        <begin position="12"/>
        <end position="32"/>
    </location>
</feature>
<feature type="region of interest" description="Disordered" evidence="3">
    <location>
        <begin position="197"/>
        <end position="216"/>
    </location>
</feature>
<feature type="compositionally biased region" description="Polar residues" evidence="3">
    <location>
        <begin position="197"/>
        <end position="207"/>
    </location>
</feature>
<organism>
    <name type="scientific">Halobacterium salinarum (strain ATCC 29341 / DSM 671 / R1)</name>
    <dbReference type="NCBI Taxonomy" id="478009"/>
    <lineage>
        <taxon>Archaea</taxon>
        <taxon>Methanobacteriati</taxon>
        <taxon>Methanobacteriota</taxon>
        <taxon>Stenosarchaea group</taxon>
        <taxon>Halobacteria</taxon>
        <taxon>Halobacteriales</taxon>
        <taxon>Halobacteriaceae</taxon>
        <taxon>Halobacterium</taxon>
        <taxon>Halobacterium salinarum NRC-34001</taxon>
    </lineage>
</organism>
<geneLocation type="plasmid" evidence="7">
    <name>PHS3</name>
</geneLocation>
<comment type="function">
    <text evidence="1 4 6">Part of the high-affinity ATP-driven potassium transport (or Kdp) system, which catalyzes the hydrolysis of ATP coupled with the electrogenic transport of potassium into the cytoplasm. This subunit acts as a catalytic chaperone that increases the ATP-binding affinity of the ATP-hydrolyzing subunit KdpB by the formation of a transient KdpB/KdpC/ATP ternary complex (By similarity). The Kdp system is essential for growth under K(+) limitation, and for survival under desiccation and salt crystal inclusion (PubMed:18633573, PubMed:23757278).</text>
</comment>
<comment type="subunit">
    <text evidence="1">The system is composed of three essential subunits: KdpA, KdpB and KdpC. The complex also contains KdpF, a small non-essential subunit.</text>
</comment>
<comment type="subcellular location">
    <subcellularLocation>
        <location evidence="2">Cell membrane</location>
        <topology evidence="2">Single-pass membrane protein</topology>
    </subcellularLocation>
</comment>
<comment type="induction">
    <text evidence="4 5 6">Up-regulated in response to K(+) limitation (PubMed:18633573, PubMed:21947979). Induced under desiccating conditions (PubMed:23757278).</text>
</comment>
<comment type="disruption phenotype">
    <text evidence="4">kdpFABCQ and kdpFABC deletion strains are only able to grow in the presence of K(+) concentrations above 60 uM.</text>
</comment>
<comment type="similarity">
    <text evidence="2">Belongs to the KdpC family.</text>
</comment>
<evidence type="ECO:0000250" key="1">
    <source>
        <dbReference type="UniProtKB" id="P03961"/>
    </source>
</evidence>
<evidence type="ECO:0000255" key="2">
    <source>
        <dbReference type="HAMAP-Rule" id="MF_00276"/>
    </source>
</evidence>
<evidence type="ECO:0000256" key="3">
    <source>
        <dbReference type="SAM" id="MobiDB-lite"/>
    </source>
</evidence>
<evidence type="ECO:0000269" key="4">
    <source>
    </source>
</evidence>
<evidence type="ECO:0000269" key="5">
    <source>
    </source>
</evidence>
<evidence type="ECO:0000269" key="6">
    <source>
    </source>
</evidence>
<evidence type="ECO:0000312" key="7">
    <source>
        <dbReference type="EMBL" id="CAP15448.1"/>
    </source>
</evidence>
<name>KDPC_HALS3</name>
<proteinExistence type="evidence at transcript level"/>
<accession>B0R9M1</accession>
<dbReference type="EMBL" id="AM774418">
    <property type="protein sequence ID" value="CAP15448.1"/>
    <property type="molecule type" value="Genomic_DNA"/>
</dbReference>
<dbReference type="RefSeq" id="WP_010904058.1">
    <property type="nucleotide sequence ID" value="NC_010368.1"/>
</dbReference>
<dbReference type="SMR" id="B0R9M1"/>
<dbReference type="EnsemblBacteria" id="CAP15448">
    <property type="protein sequence ID" value="CAP15448"/>
    <property type="gene ID" value="OE_5054F"/>
</dbReference>
<dbReference type="GeneID" id="89350627"/>
<dbReference type="KEGG" id="hsl:OE_5054F"/>
<dbReference type="HOGENOM" id="CLU_077094_1_0_2"/>
<dbReference type="PhylomeDB" id="B0R9M1"/>
<dbReference type="Proteomes" id="UP000001321">
    <property type="component" value="Plasmid PHS3"/>
</dbReference>
<dbReference type="GO" id="GO:0005886">
    <property type="term" value="C:plasma membrane"/>
    <property type="evidence" value="ECO:0007669"/>
    <property type="project" value="UniProtKB-SubCell"/>
</dbReference>
<dbReference type="GO" id="GO:0005524">
    <property type="term" value="F:ATP binding"/>
    <property type="evidence" value="ECO:0007669"/>
    <property type="project" value="UniProtKB-UniRule"/>
</dbReference>
<dbReference type="GO" id="GO:0008556">
    <property type="term" value="F:P-type potassium transmembrane transporter activity"/>
    <property type="evidence" value="ECO:0007669"/>
    <property type="project" value="InterPro"/>
</dbReference>
<dbReference type="HAMAP" id="MF_00276">
    <property type="entry name" value="KdpC"/>
    <property type="match status" value="1"/>
</dbReference>
<dbReference type="InterPro" id="IPR003820">
    <property type="entry name" value="KdpC"/>
</dbReference>
<dbReference type="PANTHER" id="PTHR30042">
    <property type="entry name" value="POTASSIUM-TRANSPORTING ATPASE C CHAIN"/>
    <property type="match status" value="1"/>
</dbReference>
<dbReference type="PANTHER" id="PTHR30042:SF2">
    <property type="entry name" value="POTASSIUM-TRANSPORTING ATPASE KDPC SUBUNIT"/>
    <property type="match status" value="1"/>
</dbReference>
<dbReference type="Pfam" id="PF02669">
    <property type="entry name" value="KdpC"/>
    <property type="match status" value="1"/>
</dbReference>
<dbReference type="PIRSF" id="PIRSF001296">
    <property type="entry name" value="K_ATPase_KdpC"/>
    <property type="match status" value="1"/>
</dbReference>